<keyword id="KW-0174">Coenzyme M biosynthesis</keyword>
<keyword id="KW-0663">Pyridoxal phosphate</keyword>
<keyword id="KW-0808">Transferase</keyword>
<name>CYAS_METBU</name>
<evidence type="ECO:0000255" key="1">
    <source>
        <dbReference type="HAMAP-Rule" id="MF_02109"/>
    </source>
</evidence>
<dbReference type="EC" id="2.5.1.76" evidence="1"/>
<dbReference type="EMBL" id="CP000300">
    <property type="protein sequence ID" value="ABE52361.1"/>
    <property type="molecule type" value="Genomic_DNA"/>
</dbReference>
<dbReference type="RefSeq" id="WP_011499505.1">
    <property type="nucleotide sequence ID" value="NC_007955.1"/>
</dbReference>
<dbReference type="SMR" id="Q12W15"/>
<dbReference type="STRING" id="259564.Mbur_1454"/>
<dbReference type="GeneID" id="3998483"/>
<dbReference type="KEGG" id="mbu:Mbur_1454"/>
<dbReference type="HOGENOM" id="CLU_666687_0_0_2"/>
<dbReference type="OrthoDB" id="6371at2157"/>
<dbReference type="UniPathway" id="UPA00355"/>
<dbReference type="Proteomes" id="UP000001979">
    <property type="component" value="Chromosome"/>
</dbReference>
<dbReference type="GO" id="GO:0005524">
    <property type="term" value="F:ATP binding"/>
    <property type="evidence" value="ECO:0007669"/>
    <property type="project" value="TreeGrafter"/>
</dbReference>
<dbReference type="GO" id="GO:0044686">
    <property type="term" value="F:cysteate synthase activity"/>
    <property type="evidence" value="ECO:0007669"/>
    <property type="project" value="UniProtKB-UniRule"/>
</dbReference>
<dbReference type="GO" id="GO:0003941">
    <property type="term" value="F:L-serine ammonia-lyase activity"/>
    <property type="evidence" value="ECO:0007669"/>
    <property type="project" value="TreeGrafter"/>
</dbReference>
<dbReference type="GO" id="GO:0000287">
    <property type="term" value="F:magnesium ion binding"/>
    <property type="evidence" value="ECO:0007669"/>
    <property type="project" value="TreeGrafter"/>
</dbReference>
<dbReference type="GO" id="GO:0030170">
    <property type="term" value="F:pyridoxal phosphate binding"/>
    <property type="evidence" value="ECO:0007669"/>
    <property type="project" value="UniProtKB-UniRule"/>
</dbReference>
<dbReference type="GO" id="GO:0030378">
    <property type="term" value="F:serine racemase activity"/>
    <property type="evidence" value="ECO:0007669"/>
    <property type="project" value="TreeGrafter"/>
</dbReference>
<dbReference type="GO" id="GO:0018114">
    <property type="term" value="F:threonine racemase activity"/>
    <property type="evidence" value="ECO:0007669"/>
    <property type="project" value="TreeGrafter"/>
</dbReference>
<dbReference type="GO" id="GO:0019295">
    <property type="term" value="P:coenzyme M biosynthetic process"/>
    <property type="evidence" value="ECO:0007669"/>
    <property type="project" value="UniProtKB-UniRule"/>
</dbReference>
<dbReference type="GO" id="GO:0070179">
    <property type="term" value="P:D-serine biosynthetic process"/>
    <property type="evidence" value="ECO:0007669"/>
    <property type="project" value="TreeGrafter"/>
</dbReference>
<dbReference type="Gene3D" id="3.40.50.1100">
    <property type="match status" value="2"/>
</dbReference>
<dbReference type="HAMAP" id="MF_02109">
    <property type="entry name" value="Cya_synthase"/>
    <property type="match status" value="1"/>
</dbReference>
<dbReference type="InterPro" id="IPR022401">
    <property type="entry name" value="Cysteate_synthase"/>
</dbReference>
<dbReference type="InterPro" id="IPR001926">
    <property type="entry name" value="TrpB-like_PALP"/>
</dbReference>
<dbReference type="InterPro" id="IPR036052">
    <property type="entry name" value="TrpB-like_PALP_sf"/>
</dbReference>
<dbReference type="NCBIfam" id="TIGR03844">
    <property type="entry name" value="cysteate_syn"/>
    <property type="match status" value="1"/>
</dbReference>
<dbReference type="PANTHER" id="PTHR43050">
    <property type="entry name" value="SERINE / THREONINE RACEMASE FAMILY MEMBER"/>
    <property type="match status" value="1"/>
</dbReference>
<dbReference type="PANTHER" id="PTHR43050:SF1">
    <property type="entry name" value="SERINE RACEMASE"/>
    <property type="match status" value="1"/>
</dbReference>
<dbReference type="Pfam" id="PF00291">
    <property type="entry name" value="PALP"/>
    <property type="match status" value="1"/>
</dbReference>
<dbReference type="SUPFAM" id="SSF53686">
    <property type="entry name" value="Tryptophan synthase beta subunit-like PLP-dependent enzymes"/>
    <property type="match status" value="1"/>
</dbReference>
<feature type="chain" id="PRO_0000392645" description="Cysteate synthase">
    <location>
        <begin position="1"/>
        <end position="417"/>
    </location>
</feature>
<feature type="binding site" evidence="1">
    <location>
        <position position="131"/>
    </location>
    <ligand>
        <name>pyridoxal 5'-phosphate</name>
        <dbReference type="ChEBI" id="CHEBI:597326"/>
    </ligand>
</feature>
<feature type="binding site" evidence="1">
    <location>
        <position position="371"/>
    </location>
    <ligand>
        <name>pyridoxal 5'-phosphate</name>
        <dbReference type="ChEBI" id="CHEBI:597326"/>
    </ligand>
</feature>
<feature type="modified residue" description="N6-(pyridoxal phosphate)lysine" evidence="1">
    <location>
        <position position="104"/>
    </location>
</feature>
<reference key="1">
    <citation type="journal article" date="2009" name="ISME J.">
        <title>The genome sequence of the psychrophilic archaeon, Methanococcoides burtonii: the role of genome evolution in cold adaptation.</title>
        <authorList>
            <person name="Allen M.A."/>
            <person name="Lauro F.M."/>
            <person name="Williams T.J."/>
            <person name="Burg D."/>
            <person name="Siddiqui K.S."/>
            <person name="De Francisci D."/>
            <person name="Chong K.W."/>
            <person name="Pilak O."/>
            <person name="Chew H.H."/>
            <person name="De Maere M.Z."/>
            <person name="Ting L."/>
            <person name="Katrib M."/>
            <person name="Ng C."/>
            <person name="Sowers K.R."/>
            <person name="Galperin M.Y."/>
            <person name="Anderson I.J."/>
            <person name="Ivanova N."/>
            <person name="Dalin E."/>
            <person name="Martinez M."/>
            <person name="Lapidus A."/>
            <person name="Hauser L."/>
            <person name="Land M."/>
            <person name="Thomas T."/>
            <person name="Cavicchioli R."/>
        </authorList>
    </citation>
    <scope>NUCLEOTIDE SEQUENCE [LARGE SCALE GENOMIC DNA]</scope>
    <source>
        <strain>DSM 6242 / NBRC 107633 / OCM 468 / ACE-M</strain>
    </source>
</reference>
<proteinExistence type="inferred from homology"/>
<protein>
    <recommendedName>
        <fullName evidence="1">Cysteate synthase</fullName>
        <shortName evidence="1">CS</shortName>
        <shortName evidence="1">Cya synthase</shortName>
        <ecNumber evidence="1">2.5.1.76</ecNumber>
    </recommendedName>
</protein>
<accession>Q12W15</accession>
<comment type="function">
    <text evidence="1">Specifically catalyzes the beta-elimination of phosphate from L-phosphoserine and the beta-addition of sulfite to the dehydroalanine intermediate to produce L-cysteate.</text>
</comment>
<comment type="catalytic activity">
    <reaction evidence="1">
        <text>O-phospho-L-serine + sulfite + H(+) = L-cysteate + phosphate</text>
        <dbReference type="Rhea" id="RHEA:26486"/>
        <dbReference type="ChEBI" id="CHEBI:15378"/>
        <dbReference type="ChEBI" id="CHEBI:17359"/>
        <dbReference type="ChEBI" id="CHEBI:43474"/>
        <dbReference type="ChEBI" id="CHEBI:57524"/>
        <dbReference type="ChEBI" id="CHEBI:58090"/>
        <dbReference type="EC" id="2.5.1.76"/>
    </reaction>
</comment>
<comment type="cofactor">
    <cofactor evidence="1">
        <name>pyridoxal 5'-phosphate</name>
        <dbReference type="ChEBI" id="CHEBI:597326"/>
    </cofactor>
</comment>
<comment type="pathway">
    <text evidence="1">Cofactor biosynthesis; coenzyme M biosynthesis.</text>
</comment>
<comment type="subunit">
    <text evidence="1">Homotrimer.</text>
</comment>
<comment type="similarity">
    <text evidence="1">Belongs to the threonine synthase family. Cysteate synthase subfamily.</text>
</comment>
<gene>
    <name type="ordered locus">Mbur_1454</name>
</gene>
<organism>
    <name type="scientific">Methanococcoides burtonii (strain DSM 6242 / NBRC 107633 / OCM 468 / ACE-M)</name>
    <dbReference type="NCBI Taxonomy" id="259564"/>
    <lineage>
        <taxon>Archaea</taxon>
        <taxon>Methanobacteriati</taxon>
        <taxon>Methanobacteriota</taxon>
        <taxon>Stenosarchaea group</taxon>
        <taxon>Methanomicrobia</taxon>
        <taxon>Methanosarcinales</taxon>
        <taxon>Methanosarcinaceae</taxon>
        <taxon>Methanococcoides</taxon>
    </lineage>
</organism>
<sequence>MKKYIVKCPGCGEVRDQYALHCPDDDALPRTEYFKKQIVPADMPGMWRYYDWLPVNGIIEKGSGRPVTYKSEGFAKELRLSDLNITFNGYWPENEGFIRTCSFKDLESFPTMQRLLENNERRVLVVASAGNTARAFAHVASITGYPLLLIVPKNSTHRLWTTEEDTSSVCTVTVDGDYYQAIAMAEKIAARDGFVSEGGARNVARRDGMGTVMLDAVLTTKSLPQHYFQAVGSGTGGISAWEAAMRLIEDGRFGNNMPRLHLAQNLPCAPLYSTWTGEQTNGNCPEEMYDDVLFNRKPPYLATGGVKDALDDTNGIIYGITNKEADEARKIFEENEGIDILPAPAIACAAIMKALEKGEIKADENIVLNITGGGQKRLEEELPTRQLSVDLALSPDDKDAENKILEKVAELLKNGGY</sequence>